<sequence>MSHAPFIAVIPARLASTRLPNKPLADIGGKPMVVRVAERAHQSSAARVVVATDAVSVADACMQHHIEAVLTRADHASGTDRLAEVATVLALPDDAIVVNVQGDEPLIAPTLIDNVAAHLRDHADCAIATAAHPIRAAADIFNPNVVKVVLDAAERALLFSRAPLPWARDAWTPAALDQPAAERPLPAMPVLRHIGIYAYRAAFLRRFPQLAAAPLEQTEQLEQLRAMWHGERIAVLTTDDAPAAGVDTAEDLARVRAAWSDLLSQDGP</sequence>
<keyword id="KW-0963">Cytoplasm</keyword>
<keyword id="KW-0448">Lipopolysaccharide biosynthesis</keyword>
<keyword id="KW-0548">Nucleotidyltransferase</keyword>
<keyword id="KW-1185">Reference proteome</keyword>
<keyword id="KW-0808">Transferase</keyword>
<name>KDSB_RALN1</name>
<reference key="1">
    <citation type="journal article" date="2002" name="Nature">
        <title>Genome sequence of the plant pathogen Ralstonia solanacearum.</title>
        <authorList>
            <person name="Salanoubat M."/>
            <person name="Genin S."/>
            <person name="Artiguenave F."/>
            <person name="Gouzy J."/>
            <person name="Mangenot S."/>
            <person name="Arlat M."/>
            <person name="Billault A."/>
            <person name="Brottier P."/>
            <person name="Camus J.-C."/>
            <person name="Cattolico L."/>
            <person name="Chandler M."/>
            <person name="Choisne N."/>
            <person name="Claudel-Renard C."/>
            <person name="Cunnac S."/>
            <person name="Demange N."/>
            <person name="Gaspin C."/>
            <person name="Lavie M."/>
            <person name="Moisan A."/>
            <person name="Robert C."/>
            <person name="Saurin W."/>
            <person name="Schiex T."/>
            <person name="Siguier P."/>
            <person name="Thebault P."/>
            <person name="Whalen M."/>
            <person name="Wincker P."/>
            <person name="Levy M."/>
            <person name="Weissenbach J."/>
            <person name="Boucher C.A."/>
        </authorList>
    </citation>
    <scope>NUCLEOTIDE SEQUENCE [LARGE SCALE GENOMIC DNA]</scope>
    <source>
        <strain>ATCC BAA-1114 / GMI1000</strain>
    </source>
</reference>
<evidence type="ECO:0000255" key="1">
    <source>
        <dbReference type="HAMAP-Rule" id="MF_00057"/>
    </source>
</evidence>
<comment type="function">
    <text evidence="1">Activates KDO (a required 8-carbon sugar) for incorporation into bacterial lipopolysaccharide in Gram-negative bacteria.</text>
</comment>
<comment type="catalytic activity">
    <reaction evidence="1">
        <text>3-deoxy-alpha-D-manno-oct-2-ulosonate + CTP = CMP-3-deoxy-beta-D-manno-octulosonate + diphosphate</text>
        <dbReference type="Rhea" id="RHEA:23448"/>
        <dbReference type="ChEBI" id="CHEBI:33019"/>
        <dbReference type="ChEBI" id="CHEBI:37563"/>
        <dbReference type="ChEBI" id="CHEBI:85986"/>
        <dbReference type="ChEBI" id="CHEBI:85987"/>
        <dbReference type="EC" id="2.7.7.38"/>
    </reaction>
</comment>
<comment type="pathway">
    <text evidence="1">Nucleotide-sugar biosynthesis; CMP-3-deoxy-D-manno-octulosonate biosynthesis; CMP-3-deoxy-D-manno-octulosonate from 3-deoxy-D-manno-octulosonate and CTP: step 1/1.</text>
</comment>
<comment type="pathway">
    <text evidence="1">Bacterial outer membrane biogenesis; lipopolysaccharide biosynthesis.</text>
</comment>
<comment type="subcellular location">
    <subcellularLocation>
        <location evidence="1">Cytoplasm</location>
    </subcellularLocation>
</comment>
<comment type="similarity">
    <text evidence="1">Belongs to the KdsB family.</text>
</comment>
<feature type="chain" id="PRO_0000370128" description="3-deoxy-manno-octulosonate cytidylyltransferase">
    <location>
        <begin position="1"/>
        <end position="268"/>
    </location>
</feature>
<dbReference type="EC" id="2.7.7.38" evidence="1"/>
<dbReference type="EMBL" id="AL646052">
    <property type="protein sequence ID" value="CAD16239.1"/>
    <property type="molecule type" value="Genomic_DNA"/>
</dbReference>
<dbReference type="RefSeq" id="WP_011002447.1">
    <property type="nucleotide sequence ID" value="NC_003295.1"/>
</dbReference>
<dbReference type="SMR" id="Q8XWE2"/>
<dbReference type="STRING" id="267608.RSc2532"/>
<dbReference type="EnsemblBacteria" id="CAD16239">
    <property type="protein sequence ID" value="CAD16239"/>
    <property type="gene ID" value="RSc2532"/>
</dbReference>
<dbReference type="KEGG" id="rso:RSc2532"/>
<dbReference type="eggNOG" id="COG1212">
    <property type="taxonomic scope" value="Bacteria"/>
</dbReference>
<dbReference type="HOGENOM" id="CLU_065038_1_0_4"/>
<dbReference type="UniPathway" id="UPA00030"/>
<dbReference type="UniPathway" id="UPA00358">
    <property type="reaction ID" value="UER00476"/>
</dbReference>
<dbReference type="Proteomes" id="UP000001436">
    <property type="component" value="Chromosome"/>
</dbReference>
<dbReference type="GO" id="GO:0005829">
    <property type="term" value="C:cytosol"/>
    <property type="evidence" value="ECO:0007669"/>
    <property type="project" value="TreeGrafter"/>
</dbReference>
<dbReference type="GO" id="GO:0008690">
    <property type="term" value="F:3-deoxy-manno-octulosonate cytidylyltransferase activity"/>
    <property type="evidence" value="ECO:0007669"/>
    <property type="project" value="UniProtKB-UniRule"/>
</dbReference>
<dbReference type="GO" id="GO:0033468">
    <property type="term" value="P:CMP-keto-3-deoxy-D-manno-octulosonic acid biosynthetic process"/>
    <property type="evidence" value="ECO:0007669"/>
    <property type="project" value="UniProtKB-UniRule"/>
</dbReference>
<dbReference type="GO" id="GO:0009103">
    <property type="term" value="P:lipopolysaccharide biosynthetic process"/>
    <property type="evidence" value="ECO:0007669"/>
    <property type="project" value="UniProtKB-UniRule"/>
</dbReference>
<dbReference type="CDD" id="cd02517">
    <property type="entry name" value="CMP-KDO-Synthetase"/>
    <property type="match status" value="1"/>
</dbReference>
<dbReference type="FunFam" id="3.90.550.10:FF:000011">
    <property type="entry name" value="3-deoxy-manno-octulosonate cytidylyltransferase"/>
    <property type="match status" value="1"/>
</dbReference>
<dbReference type="Gene3D" id="3.90.550.10">
    <property type="entry name" value="Spore Coat Polysaccharide Biosynthesis Protein SpsA, Chain A"/>
    <property type="match status" value="1"/>
</dbReference>
<dbReference type="HAMAP" id="MF_00057">
    <property type="entry name" value="KdsB"/>
    <property type="match status" value="1"/>
</dbReference>
<dbReference type="InterPro" id="IPR003329">
    <property type="entry name" value="Cytidylyl_trans"/>
</dbReference>
<dbReference type="InterPro" id="IPR004528">
    <property type="entry name" value="KdsB"/>
</dbReference>
<dbReference type="InterPro" id="IPR029044">
    <property type="entry name" value="Nucleotide-diphossugar_trans"/>
</dbReference>
<dbReference type="NCBIfam" id="TIGR00466">
    <property type="entry name" value="kdsB"/>
    <property type="match status" value="1"/>
</dbReference>
<dbReference type="NCBIfam" id="NF003952">
    <property type="entry name" value="PRK05450.1-5"/>
    <property type="match status" value="1"/>
</dbReference>
<dbReference type="NCBIfam" id="NF009905">
    <property type="entry name" value="PRK13368.1"/>
    <property type="match status" value="1"/>
</dbReference>
<dbReference type="PANTHER" id="PTHR42866">
    <property type="entry name" value="3-DEOXY-MANNO-OCTULOSONATE CYTIDYLYLTRANSFERASE"/>
    <property type="match status" value="1"/>
</dbReference>
<dbReference type="PANTHER" id="PTHR42866:SF2">
    <property type="entry name" value="3-DEOXY-MANNO-OCTULOSONATE CYTIDYLYLTRANSFERASE, MITOCHONDRIAL"/>
    <property type="match status" value="1"/>
</dbReference>
<dbReference type="Pfam" id="PF02348">
    <property type="entry name" value="CTP_transf_3"/>
    <property type="match status" value="1"/>
</dbReference>
<dbReference type="SUPFAM" id="SSF53448">
    <property type="entry name" value="Nucleotide-diphospho-sugar transferases"/>
    <property type="match status" value="1"/>
</dbReference>
<accession>Q8XWE2</accession>
<protein>
    <recommendedName>
        <fullName evidence="1">3-deoxy-manno-octulosonate cytidylyltransferase</fullName>
        <ecNumber evidence="1">2.7.7.38</ecNumber>
    </recommendedName>
    <alternativeName>
        <fullName evidence="1">CMP-2-keto-3-deoxyoctulosonic acid synthase</fullName>
        <shortName evidence="1">CKS</shortName>
        <shortName evidence="1">CMP-KDO synthase</shortName>
    </alternativeName>
</protein>
<proteinExistence type="inferred from homology"/>
<gene>
    <name evidence="1" type="primary">kdsB</name>
    <name type="ordered locus">RSc2532</name>
</gene>
<organism>
    <name type="scientific">Ralstonia nicotianae (strain ATCC BAA-1114 / GMI1000)</name>
    <name type="common">Ralstonia solanacearum</name>
    <dbReference type="NCBI Taxonomy" id="267608"/>
    <lineage>
        <taxon>Bacteria</taxon>
        <taxon>Pseudomonadati</taxon>
        <taxon>Pseudomonadota</taxon>
        <taxon>Betaproteobacteria</taxon>
        <taxon>Burkholderiales</taxon>
        <taxon>Burkholderiaceae</taxon>
        <taxon>Ralstonia</taxon>
        <taxon>Ralstonia solanacearum species complex</taxon>
    </lineage>
</organism>